<proteinExistence type="evidence at protein level"/>
<feature type="chain" id="PRO_0000430587" description="B-box zinc finger protein 23">
    <location>
        <begin position="1"/>
        <end position="162"/>
    </location>
</feature>
<feature type="zinc finger region" description="B box-type 1; atypical" evidence="2">
    <location>
        <begin position="5"/>
        <end position="47"/>
    </location>
</feature>
<feature type="zinc finger region" description="B box-type 2; atypical" evidence="2">
    <location>
        <begin position="63"/>
        <end position="101"/>
    </location>
</feature>
<feature type="region of interest" description="Disordered" evidence="3">
    <location>
        <begin position="137"/>
        <end position="162"/>
    </location>
</feature>
<feature type="binding site" evidence="2">
    <location>
        <position position="5"/>
    </location>
    <ligand>
        <name>Zn(2+)</name>
        <dbReference type="ChEBI" id="CHEBI:29105"/>
        <label>1</label>
    </ligand>
</feature>
<feature type="binding site" evidence="2">
    <location>
        <position position="8"/>
    </location>
    <ligand>
        <name>Zn(2+)</name>
        <dbReference type="ChEBI" id="CHEBI:29105"/>
        <label>1</label>
    </ligand>
</feature>
<feature type="binding site" evidence="2">
    <location>
        <position position="28"/>
    </location>
    <ligand>
        <name>Zn(2+)</name>
        <dbReference type="ChEBI" id="CHEBI:29105"/>
        <label>1</label>
    </ligand>
</feature>
<feature type="binding site" evidence="2">
    <location>
        <position position="33"/>
    </location>
    <ligand>
        <name>Zn(2+)</name>
        <dbReference type="ChEBI" id="CHEBI:29105"/>
        <label>1</label>
    </ligand>
</feature>
<feature type="binding site" evidence="2">
    <location>
        <position position="63"/>
    </location>
    <ligand>
        <name>Zn(2+)</name>
        <dbReference type="ChEBI" id="CHEBI:29105"/>
        <label>2</label>
    </ligand>
</feature>
<feature type="binding site" evidence="2">
    <location>
        <position position="66"/>
    </location>
    <ligand>
        <name>Zn(2+)</name>
        <dbReference type="ChEBI" id="CHEBI:29105"/>
        <label>2</label>
    </ligand>
</feature>
<feature type="binding site" evidence="2">
    <location>
        <position position="86"/>
    </location>
    <ligand>
        <name>Zn(2+)</name>
        <dbReference type="ChEBI" id="CHEBI:29105"/>
        <label>2</label>
    </ligand>
</feature>
<feature type="binding site" evidence="2">
    <location>
        <position position="91"/>
    </location>
    <ligand>
        <name>Zn(2+)</name>
        <dbReference type="ChEBI" id="CHEBI:29105"/>
        <label>2</label>
    </ligand>
</feature>
<organism>
    <name type="scientific">Arabidopsis thaliana</name>
    <name type="common">Mouse-ear cress</name>
    <dbReference type="NCBI Taxonomy" id="3702"/>
    <lineage>
        <taxon>Eukaryota</taxon>
        <taxon>Viridiplantae</taxon>
        <taxon>Streptophyta</taxon>
        <taxon>Embryophyta</taxon>
        <taxon>Tracheophyta</taxon>
        <taxon>Spermatophyta</taxon>
        <taxon>Magnoliopsida</taxon>
        <taxon>eudicotyledons</taxon>
        <taxon>Gunneridae</taxon>
        <taxon>Pentapetalae</taxon>
        <taxon>rosids</taxon>
        <taxon>malvids</taxon>
        <taxon>Brassicales</taxon>
        <taxon>Brassicaceae</taxon>
        <taxon>Camelineae</taxon>
        <taxon>Arabidopsis</taxon>
    </lineage>
</organism>
<gene>
    <name evidence="4" type="primary">BBX23</name>
    <name type="synonym">DBB4</name>
    <name type="synonym">STH6</name>
    <name evidence="5" type="ordered locus">At4g10240</name>
    <name evidence="7" type="ORF">F24G24.40</name>
    <name evidence="6" type="ORF">T9A4.2</name>
</gene>
<name>BBX23_ARATH</name>
<reference key="1">
    <citation type="journal article" date="1999" name="Nature">
        <title>Sequence and analysis of chromosome 4 of the plant Arabidopsis thaliana.</title>
        <authorList>
            <person name="Mayer K.F.X."/>
            <person name="Schueller C."/>
            <person name="Wambutt R."/>
            <person name="Murphy G."/>
            <person name="Volckaert G."/>
            <person name="Pohl T."/>
            <person name="Duesterhoeft A."/>
            <person name="Stiekema W."/>
            <person name="Entian K.-D."/>
            <person name="Terryn N."/>
            <person name="Harris B."/>
            <person name="Ansorge W."/>
            <person name="Brandt P."/>
            <person name="Grivell L.A."/>
            <person name="Rieger M."/>
            <person name="Weichselgartner M."/>
            <person name="de Simone V."/>
            <person name="Obermaier B."/>
            <person name="Mache R."/>
            <person name="Mueller M."/>
            <person name="Kreis M."/>
            <person name="Delseny M."/>
            <person name="Puigdomenech P."/>
            <person name="Watson M."/>
            <person name="Schmidtheini T."/>
            <person name="Reichert B."/>
            <person name="Portetelle D."/>
            <person name="Perez-Alonso M."/>
            <person name="Boutry M."/>
            <person name="Bancroft I."/>
            <person name="Vos P."/>
            <person name="Hoheisel J."/>
            <person name="Zimmermann W."/>
            <person name="Wedler H."/>
            <person name="Ridley P."/>
            <person name="Langham S.-A."/>
            <person name="McCullagh B."/>
            <person name="Bilham L."/>
            <person name="Robben J."/>
            <person name="van der Schueren J."/>
            <person name="Grymonprez B."/>
            <person name="Chuang Y.-J."/>
            <person name="Vandenbussche F."/>
            <person name="Braeken M."/>
            <person name="Weltjens I."/>
            <person name="Voet M."/>
            <person name="Bastiaens I."/>
            <person name="Aert R."/>
            <person name="Defoor E."/>
            <person name="Weitzenegger T."/>
            <person name="Bothe G."/>
            <person name="Ramsperger U."/>
            <person name="Hilbert H."/>
            <person name="Braun M."/>
            <person name="Holzer E."/>
            <person name="Brandt A."/>
            <person name="Peters S."/>
            <person name="van Staveren M."/>
            <person name="Dirkse W."/>
            <person name="Mooijman P."/>
            <person name="Klein Lankhorst R."/>
            <person name="Rose M."/>
            <person name="Hauf J."/>
            <person name="Koetter P."/>
            <person name="Berneiser S."/>
            <person name="Hempel S."/>
            <person name="Feldpausch M."/>
            <person name="Lamberth S."/>
            <person name="Van den Daele H."/>
            <person name="De Keyser A."/>
            <person name="Buysshaert C."/>
            <person name="Gielen J."/>
            <person name="Villarroel R."/>
            <person name="De Clercq R."/>
            <person name="van Montagu M."/>
            <person name="Rogers J."/>
            <person name="Cronin A."/>
            <person name="Quail M.A."/>
            <person name="Bray-Allen S."/>
            <person name="Clark L."/>
            <person name="Doggett J."/>
            <person name="Hall S."/>
            <person name="Kay M."/>
            <person name="Lennard N."/>
            <person name="McLay K."/>
            <person name="Mayes R."/>
            <person name="Pettett A."/>
            <person name="Rajandream M.A."/>
            <person name="Lyne M."/>
            <person name="Benes V."/>
            <person name="Rechmann S."/>
            <person name="Borkova D."/>
            <person name="Bloecker H."/>
            <person name="Scharfe M."/>
            <person name="Grimm M."/>
            <person name="Loehnert T.-H."/>
            <person name="Dose S."/>
            <person name="de Haan M."/>
            <person name="Maarse A.C."/>
            <person name="Schaefer M."/>
            <person name="Mueller-Auer S."/>
            <person name="Gabel C."/>
            <person name="Fuchs M."/>
            <person name="Fartmann B."/>
            <person name="Granderath K."/>
            <person name="Dauner D."/>
            <person name="Herzl A."/>
            <person name="Neumann S."/>
            <person name="Argiriou A."/>
            <person name="Vitale D."/>
            <person name="Liguori R."/>
            <person name="Piravandi E."/>
            <person name="Massenet O."/>
            <person name="Quigley F."/>
            <person name="Clabauld G."/>
            <person name="Muendlein A."/>
            <person name="Felber R."/>
            <person name="Schnabl S."/>
            <person name="Hiller R."/>
            <person name="Schmidt W."/>
            <person name="Lecharny A."/>
            <person name="Aubourg S."/>
            <person name="Chefdor F."/>
            <person name="Cooke R."/>
            <person name="Berger C."/>
            <person name="Monfort A."/>
            <person name="Casacuberta E."/>
            <person name="Gibbons T."/>
            <person name="Weber N."/>
            <person name="Vandenbol M."/>
            <person name="Bargues M."/>
            <person name="Terol J."/>
            <person name="Torres A."/>
            <person name="Perez-Perez A."/>
            <person name="Purnelle B."/>
            <person name="Bent E."/>
            <person name="Johnson S."/>
            <person name="Tacon D."/>
            <person name="Jesse T."/>
            <person name="Heijnen L."/>
            <person name="Schwarz S."/>
            <person name="Scholler P."/>
            <person name="Heber S."/>
            <person name="Francs P."/>
            <person name="Bielke C."/>
            <person name="Frishman D."/>
            <person name="Haase D."/>
            <person name="Lemcke K."/>
            <person name="Mewes H.-W."/>
            <person name="Stocker S."/>
            <person name="Zaccaria P."/>
            <person name="Bevan M."/>
            <person name="Wilson R.K."/>
            <person name="de la Bastide M."/>
            <person name="Habermann K."/>
            <person name="Parnell L."/>
            <person name="Dedhia N."/>
            <person name="Gnoj L."/>
            <person name="Schutz K."/>
            <person name="Huang E."/>
            <person name="Spiegel L."/>
            <person name="Sekhon M."/>
            <person name="Murray J."/>
            <person name="Sheet P."/>
            <person name="Cordes M."/>
            <person name="Abu-Threideh J."/>
            <person name="Stoneking T."/>
            <person name="Kalicki J."/>
            <person name="Graves T."/>
            <person name="Harmon G."/>
            <person name="Edwards J."/>
            <person name="Latreille P."/>
            <person name="Courtney L."/>
            <person name="Cloud J."/>
            <person name="Abbott A."/>
            <person name="Scott K."/>
            <person name="Johnson D."/>
            <person name="Minx P."/>
            <person name="Bentley D."/>
            <person name="Fulton B."/>
            <person name="Miller N."/>
            <person name="Greco T."/>
            <person name="Kemp K."/>
            <person name="Kramer J."/>
            <person name="Fulton L."/>
            <person name="Mardis E."/>
            <person name="Dante M."/>
            <person name="Pepin K."/>
            <person name="Hillier L.W."/>
            <person name="Nelson J."/>
            <person name="Spieth J."/>
            <person name="Ryan E."/>
            <person name="Andrews S."/>
            <person name="Geisel C."/>
            <person name="Layman D."/>
            <person name="Du H."/>
            <person name="Ali J."/>
            <person name="Berghoff A."/>
            <person name="Jones K."/>
            <person name="Drone K."/>
            <person name="Cotton M."/>
            <person name="Joshu C."/>
            <person name="Antonoiu B."/>
            <person name="Zidanic M."/>
            <person name="Strong C."/>
            <person name="Sun H."/>
            <person name="Lamar B."/>
            <person name="Yordan C."/>
            <person name="Ma P."/>
            <person name="Zhong J."/>
            <person name="Preston R."/>
            <person name="Vil D."/>
            <person name="Shekher M."/>
            <person name="Matero A."/>
            <person name="Shah R."/>
            <person name="Swaby I.K."/>
            <person name="O'Shaughnessy A."/>
            <person name="Rodriguez M."/>
            <person name="Hoffman J."/>
            <person name="Till S."/>
            <person name="Granat S."/>
            <person name="Shohdy N."/>
            <person name="Hasegawa A."/>
            <person name="Hameed A."/>
            <person name="Lodhi M."/>
            <person name="Johnson A."/>
            <person name="Chen E."/>
            <person name="Marra M.A."/>
            <person name="Martienssen R."/>
            <person name="McCombie W.R."/>
        </authorList>
    </citation>
    <scope>NUCLEOTIDE SEQUENCE [LARGE SCALE GENOMIC DNA]</scope>
    <source>
        <strain>cv. Columbia</strain>
    </source>
</reference>
<reference key="2">
    <citation type="journal article" date="2017" name="Plant J.">
        <title>Araport11: a complete reannotation of the Arabidopsis thaliana reference genome.</title>
        <authorList>
            <person name="Cheng C.Y."/>
            <person name="Krishnakumar V."/>
            <person name="Chan A.P."/>
            <person name="Thibaud-Nissen F."/>
            <person name="Schobel S."/>
            <person name="Town C.D."/>
        </authorList>
    </citation>
    <scope>GENOME REANNOTATION</scope>
    <source>
        <strain>cv. Columbia</strain>
    </source>
</reference>
<reference key="3">
    <citation type="journal article" date="2003" name="Science">
        <title>Empirical analysis of transcriptional activity in the Arabidopsis genome.</title>
        <authorList>
            <person name="Yamada K."/>
            <person name="Lim J."/>
            <person name="Dale J.M."/>
            <person name="Chen H."/>
            <person name="Shinn P."/>
            <person name="Palm C.J."/>
            <person name="Southwick A.M."/>
            <person name="Wu H.C."/>
            <person name="Kim C.J."/>
            <person name="Nguyen M."/>
            <person name="Pham P.K."/>
            <person name="Cheuk R.F."/>
            <person name="Karlin-Newmann G."/>
            <person name="Liu S.X."/>
            <person name="Lam B."/>
            <person name="Sakano H."/>
            <person name="Wu T."/>
            <person name="Yu G."/>
            <person name="Miranda M."/>
            <person name="Quach H.L."/>
            <person name="Tripp M."/>
            <person name="Chang C.H."/>
            <person name="Lee J.M."/>
            <person name="Toriumi M.J."/>
            <person name="Chan M.M."/>
            <person name="Tang C.C."/>
            <person name="Onodera C.S."/>
            <person name="Deng J.M."/>
            <person name="Akiyama K."/>
            <person name="Ansari Y."/>
            <person name="Arakawa T."/>
            <person name="Banh J."/>
            <person name="Banno F."/>
            <person name="Bowser L."/>
            <person name="Brooks S.Y."/>
            <person name="Carninci P."/>
            <person name="Chao Q."/>
            <person name="Choy N."/>
            <person name="Enju A."/>
            <person name="Goldsmith A.D."/>
            <person name="Gurjal M."/>
            <person name="Hansen N.F."/>
            <person name="Hayashizaki Y."/>
            <person name="Johnson-Hopson C."/>
            <person name="Hsuan V.W."/>
            <person name="Iida K."/>
            <person name="Karnes M."/>
            <person name="Khan S."/>
            <person name="Koesema E."/>
            <person name="Ishida J."/>
            <person name="Jiang P.X."/>
            <person name="Jones T."/>
            <person name="Kawai J."/>
            <person name="Kamiya A."/>
            <person name="Meyers C."/>
            <person name="Nakajima M."/>
            <person name="Narusaka M."/>
            <person name="Seki M."/>
            <person name="Sakurai T."/>
            <person name="Satou M."/>
            <person name="Tamse R."/>
            <person name="Vaysberg M."/>
            <person name="Wallender E.K."/>
            <person name="Wong C."/>
            <person name="Yamamura Y."/>
            <person name="Yuan S."/>
            <person name="Shinozaki K."/>
            <person name="Davis R.W."/>
            <person name="Theologis A."/>
            <person name="Ecker J.R."/>
        </authorList>
    </citation>
    <scope>NUCLEOTIDE SEQUENCE [LARGE SCALE MRNA]</scope>
    <source>
        <strain>cv. Columbia</strain>
    </source>
</reference>
<reference key="4">
    <citation type="journal article" date="2009" name="Plant Cell">
        <title>The Arabidopsis B-box zinc finger family.</title>
        <authorList>
            <person name="Khanna R."/>
            <person name="Kronmiller B."/>
            <person name="Maszle D.R."/>
            <person name="Coupland G."/>
            <person name="Holm M."/>
            <person name="Mizuno T."/>
            <person name="Wu S.H."/>
        </authorList>
    </citation>
    <scope>GENE FAMILY</scope>
    <scope>NOMENCLATURE</scope>
</reference>
<evidence type="ECO:0000250" key="1">
    <source>
        <dbReference type="UniProtKB" id="Q9SJU5"/>
    </source>
</evidence>
<evidence type="ECO:0000255" key="2">
    <source>
        <dbReference type="PROSITE-ProRule" id="PRU00024"/>
    </source>
</evidence>
<evidence type="ECO:0000256" key="3">
    <source>
        <dbReference type="SAM" id="MobiDB-lite"/>
    </source>
</evidence>
<evidence type="ECO:0000303" key="4">
    <source>
    </source>
</evidence>
<evidence type="ECO:0000312" key="5">
    <source>
        <dbReference type="Araport" id="AT4G10240"/>
    </source>
</evidence>
<evidence type="ECO:0000312" key="6">
    <source>
        <dbReference type="EMBL" id="AAC62805.1"/>
    </source>
</evidence>
<evidence type="ECO:0000312" key="7">
    <source>
        <dbReference type="EMBL" id="CAB39777.1"/>
    </source>
</evidence>
<keyword id="KW-0479">Metal-binding</keyword>
<keyword id="KW-0539">Nucleus</keyword>
<keyword id="KW-1185">Reference proteome</keyword>
<keyword id="KW-0677">Repeat</keyword>
<keyword id="KW-0804">Transcription</keyword>
<keyword id="KW-0805">Transcription regulation</keyword>
<keyword id="KW-0862">Zinc</keyword>
<keyword id="KW-0863">Zinc-finger</keyword>
<accession>O82617</accession>
<sequence length="162" mass="17859">MKIQCEVCEKAEAEVLCCSDEAVLCKPCDIKVHEANKLFQRHHRVALQKDAASATTASGAPLCDICQERKGYFFCLEDRAMLCNDCDEAIHTCNSHQRFLLSGVQVSDQSLTENSECSTSFSSETYQIQSKVSLNSQYSSEETEAGNSGEIVHKNPSVILSP</sequence>
<dbReference type="EMBL" id="AF096373">
    <property type="protein sequence ID" value="AAC62805.1"/>
    <property type="molecule type" value="Genomic_DNA"/>
</dbReference>
<dbReference type="EMBL" id="AL049488">
    <property type="protein sequence ID" value="CAB39777.1"/>
    <property type="molecule type" value="Genomic_DNA"/>
</dbReference>
<dbReference type="EMBL" id="AL161516">
    <property type="protein sequence ID" value="CAB78147.1"/>
    <property type="molecule type" value="Genomic_DNA"/>
</dbReference>
<dbReference type="EMBL" id="CP002687">
    <property type="protein sequence ID" value="AEE82858.1"/>
    <property type="molecule type" value="Genomic_DNA"/>
</dbReference>
<dbReference type="EMBL" id="AY122916">
    <property type="protein sequence ID" value="AAM67449.1"/>
    <property type="molecule type" value="mRNA"/>
</dbReference>
<dbReference type="PIR" id="T01973">
    <property type="entry name" value="T01973"/>
</dbReference>
<dbReference type="RefSeq" id="NP_192762.1">
    <property type="nucleotide sequence ID" value="NM_117092.3"/>
</dbReference>
<dbReference type="SMR" id="O82617"/>
<dbReference type="BioGRID" id="11914">
    <property type="interactions" value="44"/>
</dbReference>
<dbReference type="IntAct" id="O82617">
    <property type="interactions" value="42"/>
</dbReference>
<dbReference type="STRING" id="3702.O82617"/>
<dbReference type="PaxDb" id="3702-AT4G10240.1"/>
<dbReference type="EnsemblPlants" id="AT4G10240.1">
    <property type="protein sequence ID" value="AT4G10240.1"/>
    <property type="gene ID" value="AT4G10240"/>
</dbReference>
<dbReference type="GeneID" id="826615"/>
<dbReference type="Gramene" id="AT4G10240.1">
    <property type="protein sequence ID" value="AT4G10240.1"/>
    <property type="gene ID" value="AT4G10240"/>
</dbReference>
<dbReference type="KEGG" id="ath:AT4G10240"/>
<dbReference type="Araport" id="AT4G10240"/>
<dbReference type="TAIR" id="AT4G10240">
    <property type="gene designation" value="BBX23"/>
</dbReference>
<dbReference type="eggNOG" id="ENOG502R6P5">
    <property type="taxonomic scope" value="Eukaryota"/>
</dbReference>
<dbReference type="HOGENOM" id="CLU_025298_1_1_1"/>
<dbReference type="InParanoid" id="O82617"/>
<dbReference type="OMA" id="CQERKGY"/>
<dbReference type="PhylomeDB" id="O82617"/>
<dbReference type="PRO" id="PR:O82617"/>
<dbReference type="Proteomes" id="UP000006548">
    <property type="component" value="Chromosome 4"/>
</dbReference>
<dbReference type="ExpressionAtlas" id="O82617">
    <property type="expression patterns" value="baseline and differential"/>
</dbReference>
<dbReference type="GO" id="GO:0005634">
    <property type="term" value="C:nucleus"/>
    <property type="evidence" value="ECO:0007669"/>
    <property type="project" value="UniProtKB-SubCell"/>
</dbReference>
<dbReference type="GO" id="GO:0003700">
    <property type="term" value="F:DNA-binding transcription factor activity"/>
    <property type="evidence" value="ECO:0000250"/>
    <property type="project" value="TAIR"/>
</dbReference>
<dbReference type="GO" id="GO:0008270">
    <property type="term" value="F:zinc ion binding"/>
    <property type="evidence" value="ECO:0007669"/>
    <property type="project" value="UniProtKB-KW"/>
</dbReference>
<dbReference type="GO" id="GO:0006355">
    <property type="term" value="P:regulation of DNA-templated transcription"/>
    <property type="evidence" value="ECO:0000304"/>
    <property type="project" value="TAIR"/>
</dbReference>
<dbReference type="CDD" id="cd19821">
    <property type="entry name" value="Bbox1_BBX-like"/>
    <property type="match status" value="1"/>
</dbReference>
<dbReference type="FunFam" id="3.30.160.60:FF:000589">
    <property type="entry name" value="B-box zinc finger protein 22"/>
    <property type="match status" value="1"/>
</dbReference>
<dbReference type="Gene3D" id="3.30.160.60">
    <property type="entry name" value="Classic Zinc Finger"/>
    <property type="match status" value="1"/>
</dbReference>
<dbReference type="InterPro" id="IPR051979">
    <property type="entry name" value="B-box_zinc_finger"/>
</dbReference>
<dbReference type="InterPro" id="IPR049808">
    <property type="entry name" value="CONSTANS-like_Bbox1"/>
</dbReference>
<dbReference type="InterPro" id="IPR000315">
    <property type="entry name" value="Znf_B-box"/>
</dbReference>
<dbReference type="PANTHER" id="PTHR31832">
    <property type="entry name" value="B-BOX ZINC FINGER PROTEIN 22"/>
    <property type="match status" value="1"/>
</dbReference>
<dbReference type="PANTHER" id="PTHR31832:SF63">
    <property type="entry name" value="B-BOX ZINC FINGER PROTEIN 23"/>
    <property type="match status" value="1"/>
</dbReference>
<dbReference type="Pfam" id="PF00643">
    <property type="entry name" value="zf-B_box"/>
    <property type="match status" value="1"/>
</dbReference>
<dbReference type="SMART" id="SM00336">
    <property type="entry name" value="BBOX"/>
    <property type="match status" value="2"/>
</dbReference>
<dbReference type="PROSITE" id="PS50119">
    <property type="entry name" value="ZF_BBOX"/>
    <property type="match status" value="2"/>
</dbReference>
<protein>
    <recommendedName>
        <fullName evidence="4">B-box zinc finger protein 23</fullName>
    </recommendedName>
    <alternativeName>
        <fullName>Protein DOUBLE B-BOX 4</fullName>
    </alternativeName>
    <alternativeName>
        <fullName>Protein SALT TOLERANCE HOMOLOG 6</fullName>
    </alternativeName>
</protein>
<comment type="function">
    <text evidence="1">Probable transcription factor that may be involved in seedling photomorphogenesis.</text>
</comment>
<comment type="interaction">
    <interactant intactId="EBI-15191793">
        <id>O82617</id>
    </interactant>
    <interactant intactId="EBI-15199417">
        <id>Q58FU4</id>
        <label>At5g05330</label>
    </interactant>
    <organismsDiffer>false</organismsDiffer>
    <experiments>4</experiments>
</comment>
<comment type="interaction">
    <interactant intactId="EBI-15191793">
        <id>O82617</id>
    </interactant>
    <interactant intactId="EBI-4430993">
        <id>C0SVM5</id>
        <label>BBX19</label>
    </interactant>
    <organismsDiffer>false</organismsDiffer>
    <experiments>3</experiments>
</comment>
<comment type="interaction">
    <interactant intactId="EBI-15191793">
        <id>O82617</id>
    </interactant>
    <interactant intactId="EBI-631943">
        <id>Q96288</id>
        <label>BBX24</label>
    </interactant>
    <organismsDiffer>false</organismsDiffer>
    <experiments>3</experiments>
</comment>
<comment type="interaction">
    <interactant intactId="EBI-15191793">
        <id>O82617</id>
    </interactant>
    <interactant intactId="EBI-1639724">
        <id>Q39057</id>
        <label>CO</label>
    </interactant>
    <organismsDiffer>false</organismsDiffer>
    <experiments>4</experiments>
</comment>
<comment type="interaction">
    <interactant intactId="EBI-15191793">
        <id>O82617</id>
    </interactant>
    <interactant intactId="EBI-1112154">
        <id>O50055</id>
        <label>COL1</label>
    </interactant>
    <organismsDiffer>false</organismsDiffer>
    <experiments>3</experiments>
</comment>
<comment type="interaction">
    <interactant intactId="EBI-15191793">
        <id>O82617</id>
    </interactant>
    <interactant intactId="EBI-15198801">
        <id>Q8VZP4</id>
        <label>GATA10</label>
    </interactant>
    <organismsDiffer>false</organismsDiffer>
    <experiments>3</experiments>
</comment>
<comment type="interaction">
    <interactant intactId="EBI-15191793">
        <id>O82617</id>
    </interactant>
    <interactant intactId="EBI-4426127">
        <id>Q8GXL7</id>
        <label>GATA24</label>
    </interactant>
    <organismsDiffer>false</organismsDiffer>
    <experiments>3</experiments>
</comment>
<comment type="interaction">
    <interactant intactId="EBI-15191793">
        <id>O82617</id>
    </interactant>
    <interactant intactId="EBI-4435064">
        <id>Q8H1G0</id>
        <label>GATA28</label>
    </interactant>
    <organismsDiffer>false</organismsDiffer>
    <experiments>4</experiments>
</comment>
<comment type="interaction">
    <interactant intactId="EBI-15191793">
        <id>O82617</id>
    </interactant>
    <interactant intactId="EBI-301660">
        <id>O24646</id>
        <label>HY5</label>
    </interactant>
    <organismsDiffer>false</organismsDiffer>
    <experiments>4</experiments>
</comment>
<comment type="interaction">
    <interactant intactId="EBI-15191793">
        <id>O82617</id>
    </interactant>
    <interactant intactId="EBI-15198627">
        <id>Q9M1U4</id>
        <label>TCP16</label>
    </interactant>
    <organismsDiffer>false</organismsDiffer>
    <experiments>3</experiments>
</comment>
<comment type="subcellular location">
    <subcellularLocation>
        <location evidence="1">Nucleus</location>
    </subcellularLocation>
</comment>